<comment type="function">
    <text evidence="2">Component of the ubiquinol-cytochrome c reductase complex (complex III or cytochrome b-c1 complex) that is part of the mitochondrial respiratory chain. The b-c1 complex mediates electron transfer from ubiquinol to cytochrome c. Contributes to the generation of a proton gradient across the mitochondrial membrane that is then used for ATP synthesis.</text>
</comment>
<comment type="cofactor">
    <cofactor evidence="2">
        <name>heme b</name>
        <dbReference type="ChEBI" id="CHEBI:60344"/>
    </cofactor>
    <text evidence="2">Binds 2 heme b groups non-covalently.</text>
</comment>
<comment type="subunit">
    <text evidence="2">The cytochrome bc1 complex contains 11 subunits: 3 respiratory subunits (MT-CYB, CYC1 and UQCRFS1), 2 core proteins (UQCRC1 and UQCRC2) and 6 low-molecular weight proteins (UQCRH/QCR6, UQCRB/QCR7, UQCRQ/QCR8, UQCR10/QCR9, UQCR11/QCR10 and a cleavage product of UQCRFS1). This cytochrome bc1 complex then forms a dimer.</text>
</comment>
<comment type="subcellular location">
    <subcellularLocation>
        <location evidence="2">Mitochondrion inner membrane</location>
        <topology evidence="2">Multi-pass membrane protein</topology>
    </subcellularLocation>
</comment>
<comment type="miscellaneous">
    <text evidence="1">Heme 1 (or BL or b562) is low-potential and absorbs at about 562 nm, and heme 2 (or BH or b566) is high-potential and absorbs at about 566 nm.</text>
</comment>
<comment type="similarity">
    <text evidence="3 4">Belongs to the cytochrome b family.</text>
</comment>
<comment type="caution">
    <text evidence="2">The full-length protein contains only eight transmembrane helices, not nine as predicted by bioinformatics tools.</text>
</comment>
<protein>
    <recommendedName>
        <fullName>Cytochrome b</fullName>
    </recommendedName>
    <alternativeName>
        <fullName>Complex III subunit 3</fullName>
    </alternativeName>
    <alternativeName>
        <fullName>Complex III subunit III</fullName>
    </alternativeName>
    <alternativeName>
        <fullName>Cytochrome b-c1 complex subunit 3</fullName>
    </alternativeName>
    <alternativeName>
        <fullName>Ubiquinol-cytochrome-c reductase complex cytochrome b subunit</fullName>
    </alternativeName>
</protein>
<keyword id="KW-0249">Electron transport</keyword>
<keyword id="KW-0349">Heme</keyword>
<keyword id="KW-0408">Iron</keyword>
<keyword id="KW-0472">Membrane</keyword>
<keyword id="KW-0479">Metal-binding</keyword>
<keyword id="KW-0496">Mitochondrion</keyword>
<keyword id="KW-0999">Mitochondrion inner membrane</keyword>
<keyword id="KW-0679">Respiratory chain</keyword>
<keyword id="KW-0812">Transmembrane</keyword>
<keyword id="KW-1133">Transmembrane helix</keyword>
<keyword id="KW-0813">Transport</keyword>
<keyword id="KW-0830">Ubiquinone</keyword>
<proteinExistence type="inferred from homology"/>
<name>CYB_MYOAU</name>
<sequence>MTNIRKSXPXXKIIXXSFIDLPAPSNISSWWNFGSLLGICLALQILTGLFLAMHYTSDTATAFNSVTHICRDVNYGWILRYLHANGASMFFICLYLHMGRGLYYGSYMYTETWNVGVILLFAVMATAFMGYVLPWGQMSFWGATVITNLLSAIPYIGTDLVEWIWGGFSVDKATLTRFFAFHFLLPFIIAAMVMVHLLFLHETGSNNPTGIPSNADMIPFHPYYTIKDILGLLLMITTLLMLVLFAPDMLGDPDNYTPANPLNTPPHIKPEWYFLFAYAILRSIPNKLGGVLALVLSILILIIIPLLHTSKQRSMTFRPLSQCLFWLLAADLLTLTWIGGQPVEHPYVIIGQLASILYFSIIIILMPLTSLMENHLLKW</sequence>
<gene>
    <name type="primary">MT-CYB</name>
    <name type="synonym">COB</name>
    <name type="synonym">CYTB</name>
    <name type="synonym">MTCYB</name>
</gene>
<reference key="1">
    <citation type="journal article" date="2007" name="Mol. Phylogenet. Evol.">
        <title>Molecular phylogeny of New World myotis (Chiroptera, Vespertilionidae) inferred from mitochondrial and nuclear DNA genes.</title>
        <authorList>
            <person name="Stadelmann B."/>
            <person name="Lin L.K."/>
            <person name="Kunz T.H."/>
            <person name="Ruedi M."/>
        </authorList>
    </citation>
    <scope>NUCLEOTIDE SEQUENCE [GENOMIC DNA]</scope>
</reference>
<feature type="chain" id="PRO_0000323389" description="Cytochrome b">
    <location>
        <begin position="1"/>
        <end position="379"/>
    </location>
</feature>
<feature type="transmembrane region" description="Helical" evidence="2">
    <location>
        <begin position="33"/>
        <end position="53"/>
    </location>
</feature>
<feature type="transmembrane region" description="Helical" evidence="2">
    <location>
        <begin position="77"/>
        <end position="98"/>
    </location>
</feature>
<feature type="transmembrane region" description="Helical" evidence="2">
    <location>
        <begin position="113"/>
        <end position="133"/>
    </location>
</feature>
<feature type="transmembrane region" description="Helical" evidence="2">
    <location>
        <begin position="178"/>
        <end position="198"/>
    </location>
</feature>
<feature type="transmembrane region" description="Helical" evidence="2">
    <location>
        <begin position="226"/>
        <end position="246"/>
    </location>
</feature>
<feature type="transmembrane region" description="Helical" evidence="2">
    <location>
        <begin position="288"/>
        <end position="308"/>
    </location>
</feature>
<feature type="transmembrane region" description="Helical" evidence="2">
    <location>
        <begin position="320"/>
        <end position="340"/>
    </location>
</feature>
<feature type="transmembrane region" description="Helical" evidence="2">
    <location>
        <begin position="347"/>
        <end position="367"/>
    </location>
</feature>
<feature type="binding site" description="axial binding residue" evidence="2">
    <location>
        <position position="83"/>
    </location>
    <ligand>
        <name>heme b</name>
        <dbReference type="ChEBI" id="CHEBI:60344"/>
        <label>b562</label>
    </ligand>
    <ligandPart>
        <name>Fe</name>
        <dbReference type="ChEBI" id="CHEBI:18248"/>
    </ligandPart>
</feature>
<feature type="binding site" description="axial binding residue" evidence="2">
    <location>
        <position position="97"/>
    </location>
    <ligand>
        <name>heme b</name>
        <dbReference type="ChEBI" id="CHEBI:60344"/>
        <label>b566</label>
    </ligand>
    <ligandPart>
        <name>Fe</name>
        <dbReference type="ChEBI" id="CHEBI:18248"/>
    </ligandPart>
</feature>
<feature type="binding site" description="axial binding residue" evidence="2">
    <location>
        <position position="182"/>
    </location>
    <ligand>
        <name>heme b</name>
        <dbReference type="ChEBI" id="CHEBI:60344"/>
        <label>b562</label>
    </ligand>
    <ligandPart>
        <name>Fe</name>
        <dbReference type="ChEBI" id="CHEBI:18248"/>
    </ligandPart>
</feature>
<feature type="binding site" description="axial binding residue" evidence="2">
    <location>
        <position position="196"/>
    </location>
    <ligand>
        <name>heme b</name>
        <dbReference type="ChEBI" id="CHEBI:60344"/>
        <label>b566</label>
    </ligand>
    <ligandPart>
        <name>Fe</name>
        <dbReference type="ChEBI" id="CHEBI:18248"/>
    </ligandPart>
</feature>
<feature type="binding site" evidence="2">
    <location>
        <position position="201"/>
    </location>
    <ligand>
        <name>a ubiquinone</name>
        <dbReference type="ChEBI" id="CHEBI:16389"/>
    </ligand>
</feature>
<dbReference type="EMBL" id="AM261884">
    <property type="protein sequence ID" value="CAK12820.1"/>
    <property type="molecule type" value="Genomic_DNA"/>
</dbReference>
<dbReference type="GO" id="GO:0005743">
    <property type="term" value="C:mitochondrial inner membrane"/>
    <property type="evidence" value="ECO:0007669"/>
    <property type="project" value="UniProtKB-SubCell"/>
</dbReference>
<dbReference type="GO" id="GO:0045275">
    <property type="term" value="C:respiratory chain complex III"/>
    <property type="evidence" value="ECO:0007669"/>
    <property type="project" value="InterPro"/>
</dbReference>
<dbReference type="GO" id="GO:0046872">
    <property type="term" value="F:metal ion binding"/>
    <property type="evidence" value="ECO:0007669"/>
    <property type="project" value="UniProtKB-KW"/>
</dbReference>
<dbReference type="GO" id="GO:0008121">
    <property type="term" value="F:ubiquinol-cytochrome-c reductase activity"/>
    <property type="evidence" value="ECO:0007669"/>
    <property type="project" value="InterPro"/>
</dbReference>
<dbReference type="GO" id="GO:0006122">
    <property type="term" value="P:mitochondrial electron transport, ubiquinol to cytochrome c"/>
    <property type="evidence" value="ECO:0007669"/>
    <property type="project" value="TreeGrafter"/>
</dbReference>
<dbReference type="CDD" id="cd00290">
    <property type="entry name" value="cytochrome_b_C"/>
    <property type="match status" value="1"/>
</dbReference>
<dbReference type="CDD" id="cd00284">
    <property type="entry name" value="Cytochrome_b_N"/>
    <property type="match status" value="1"/>
</dbReference>
<dbReference type="FunFam" id="1.20.810.10:FF:000002">
    <property type="entry name" value="Cytochrome b"/>
    <property type="match status" value="1"/>
</dbReference>
<dbReference type="Gene3D" id="1.20.810.10">
    <property type="entry name" value="Cytochrome Bc1 Complex, Chain C"/>
    <property type="match status" value="1"/>
</dbReference>
<dbReference type="InterPro" id="IPR005798">
    <property type="entry name" value="Cyt_b/b6_C"/>
</dbReference>
<dbReference type="InterPro" id="IPR036150">
    <property type="entry name" value="Cyt_b/b6_C_sf"/>
</dbReference>
<dbReference type="InterPro" id="IPR005797">
    <property type="entry name" value="Cyt_b/b6_N"/>
</dbReference>
<dbReference type="InterPro" id="IPR027387">
    <property type="entry name" value="Cytb/b6-like_sf"/>
</dbReference>
<dbReference type="InterPro" id="IPR030689">
    <property type="entry name" value="Cytochrome_b"/>
</dbReference>
<dbReference type="InterPro" id="IPR048260">
    <property type="entry name" value="Cytochrome_b_C_euk/bac"/>
</dbReference>
<dbReference type="InterPro" id="IPR048259">
    <property type="entry name" value="Cytochrome_b_N_euk/bac"/>
</dbReference>
<dbReference type="InterPro" id="IPR016174">
    <property type="entry name" value="Di-haem_cyt_TM"/>
</dbReference>
<dbReference type="PANTHER" id="PTHR19271">
    <property type="entry name" value="CYTOCHROME B"/>
    <property type="match status" value="1"/>
</dbReference>
<dbReference type="PANTHER" id="PTHR19271:SF16">
    <property type="entry name" value="CYTOCHROME B"/>
    <property type="match status" value="1"/>
</dbReference>
<dbReference type="Pfam" id="PF00032">
    <property type="entry name" value="Cytochrom_B_C"/>
    <property type="match status" value="1"/>
</dbReference>
<dbReference type="Pfam" id="PF00033">
    <property type="entry name" value="Cytochrome_B"/>
    <property type="match status" value="1"/>
</dbReference>
<dbReference type="PIRSF" id="PIRSF038885">
    <property type="entry name" value="COB"/>
    <property type="match status" value="1"/>
</dbReference>
<dbReference type="SUPFAM" id="SSF81648">
    <property type="entry name" value="a domain/subunit of cytochrome bc1 complex (Ubiquinol-cytochrome c reductase)"/>
    <property type="match status" value="1"/>
</dbReference>
<dbReference type="SUPFAM" id="SSF81342">
    <property type="entry name" value="Transmembrane di-heme cytochromes"/>
    <property type="match status" value="1"/>
</dbReference>
<dbReference type="PROSITE" id="PS51003">
    <property type="entry name" value="CYTB_CTER"/>
    <property type="match status" value="1"/>
</dbReference>
<dbReference type="PROSITE" id="PS51002">
    <property type="entry name" value="CYTB_NTER"/>
    <property type="match status" value="1"/>
</dbReference>
<evidence type="ECO:0000250" key="1"/>
<evidence type="ECO:0000250" key="2">
    <source>
        <dbReference type="UniProtKB" id="P00157"/>
    </source>
</evidence>
<evidence type="ECO:0000255" key="3">
    <source>
        <dbReference type="PROSITE-ProRule" id="PRU00967"/>
    </source>
</evidence>
<evidence type="ECO:0000255" key="4">
    <source>
        <dbReference type="PROSITE-ProRule" id="PRU00968"/>
    </source>
</evidence>
<accession>A1IVY7</accession>
<organism>
    <name type="scientific">Myotis auriculus</name>
    <name type="common">Southwestern myotis</name>
    <name type="synonym">Myotis evotis auriculus</name>
    <dbReference type="NCBI Taxonomy" id="321263"/>
    <lineage>
        <taxon>Eukaryota</taxon>
        <taxon>Metazoa</taxon>
        <taxon>Chordata</taxon>
        <taxon>Craniata</taxon>
        <taxon>Vertebrata</taxon>
        <taxon>Euteleostomi</taxon>
        <taxon>Mammalia</taxon>
        <taxon>Eutheria</taxon>
        <taxon>Laurasiatheria</taxon>
        <taxon>Chiroptera</taxon>
        <taxon>Yangochiroptera</taxon>
        <taxon>Vespertilionidae</taxon>
        <taxon>Myotis</taxon>
    </lineage>
</organism>
<geneLocation type="mitochondrion"/>